<accession>C1KW79</accession>
<gene>
    <name evidence="1" type="primary">pepT</name>
    <name type="ordered locus">Lm4b_01796</name>
</gene>
<feature type="chain" id="PRO_1000211994" description="Peptidase T">
    <location>
        <begin position="1"/>
        <end position="410"/>
    </location>
</feature>
<feature type="active site" evidence="1">
    <location>
        <position position="81"/>
    </location>
</feature>
<feature type="active site" description="Proton acceptor" evidence="1">
    <location>
        <position position="176"/>
    </location>
</feature>
<feature type="binding site" evidence="1">
    <location>
        <position position="79"/>
    </location>
    <ligand>
        <name>Zn(2+)</name>
        <dbReference type="ChEBI" id="CHEBI:29105"/>
        <label>1</label>
    </ligand>
</feature>
<feature type="binding site" evidence="1">
    <location>
        <position position="142"/>
    </location>
    <ligand>
        <name>Zn(2+)</name>
        <dbReference type="ChEBI" id="CHEBI:29105"/>
        <label>1</label>
    </ligand>
</feature>
<feature type="binding site" evidence="1">
    <location>
        <position position="142"/>
    </location>
    <ligand>
        <name>Zn(2+)</name>
        <dbReference type="ChEBI" id="CHEBI:29105"/>
        <label>2</label>
    </ligand>
</feature>
<feature type="binding site" evidence="1">
    <location>
        <position position="177"/>
    </location>
    <ligand>
        <name>Zn(2+)</name>
        <dbReference type="ChEBI" id="CHEBI:29105"/>
        <label>2</label>
    </ligand>
</feature>
<feature type="binding site" evidence="1">
    <location>
        <position position="199"/>
    </location>
    <ligand>
        <name>Zn(2+)</name>
        <dbReference type="ChEBI" id="CHEBI:29105"/>
        <label>1</label>
    </ligand>
</feature>
<feature type="binding site" evidence="1">
    <location>
        <position position="381"/>
    </location>
    <ligand>
        <name>Zn(2+)</name>
        <dbReference type="ChEBI" id="CHEBI:29105"/>
        <label>2</label>
    </ligand>
</feature>
<reference key="1">
    <citation type="journal article" date="2012" name="BMC Genomics">
        <title>Comparative genomics and transcriptomics of lineages I, II, and III strains of Listeria monocytogenes.</title>
        <authorList>
            <person name="Hain T."/>
            <person name="Ghai R."/>
            <person name="Billion A."/>
            <person name="Kuenne C.T."/>
            <person name="Steinweg C."/>
            <person name="Izar B."/>
            <person name="Mohamed W."/>
            <person name="Mraheil M."/>
            <person name="Domann E."/>
            <person name="Schaffrath S."/>
            <person name="Karst U."/>
            <person name="Goesmann A."/>
            <person name="Oehm S."/>
            <person name="Puhler A."/>
            <person name="Merkl R."/>
            <person name="Vorwerk S."/>
            <person name="Glaser P."/>
            <person name="Garrido P."/>
            <person name="Rusniok C."/>
            <person name="Buchrieser C."/>
            <person name="Goebel W."/>
            <person name="Chakraborty T."/>
        </authorList>
    </citation>
    <scope>NUCLEOTIDE SEQUENCE [LARGE SCALE GENOMIC DNA]</scope>
    <source>
        <strain>CLIP80459</strain>
    </source>
</reference>
<comment type="function">
    <text evidence="1">Cleaves the N-terminal amino acid of tripeptides.</text>
</comment>
<comment type="catalytic activity">
    <reaction evidence="1">
        <text>Release of the N-terminal residue from a tripeptide.</text>
        <dbReference type="EC" id="3.4.11.4"/>
    </reaction>
</comment>
<comment type="cofactor">
    <cofactor evidence="1">
        <name>Zn(2+)</name>
        <dbReference type="ChEBI" id="CHEBI:29105"/>
    </cofactor>
    <text evidence="1">Binds 2 Zn(2+) ions per subunit.</text>
</comment>
<comment type="subcellular location">
    <subcellularLocation>
        <location evidence="1">Cytoplasm</location>
    </subcellularLocation>
</comment>
<comment type="similarity">
    <text evidence="1">Belongs to the peptidase M20B family.</text>
</comment>
<sequence>MKEELLKRFTKYVKVDTQSNEESKACPTTPGQMELANILVTELKEIGMQEVTVDEFGYVMATLPSNTTKEVPVIGFLAHLDTATDLTGKNVQPQVHENYDGKDIVLNKDLNVVLSPKQFPELADYNGKTLITTDGTTLLGADDKAGITEIMVAMNHLINHPEIKHGKIRVAFTPDEEIGRGPERFDVEAFGAKYAYTMDGGPLGELEYESFNAAGAKITFNGNSVHPGTAKNKMVNAVKMAMEFNAHIPKDEAPEYTEGYEGFYHLISLNGDVEQAKAYYIIRDFDHLKFVERKTHIASIAKELEEKYGEGSVELKLNDQYYNMREKIEPVKEIVDIVSAAMRNLDIEPKISPIRGGTDGAQLSYKGLPTPNIFGGGENFHGKFEYVALESMVKATEVIIEVARLFEEKE</sequence>
<evidence type="ECO:0000255" key="1">
    <source>
        <dbReference type="HAMAP-Rule" id="MF_00550"/>
    </source>
</evidence>
<dbReference type="EC" id="3.4.11.4" evidence="1"/>
<dbReference type="EMBL" id="FM242711">
    <property type="protein sequence ID" value="CAS05554.1"/>
    <property type="molecule type" value="Genomic_DNA"/>
</dbReference>
<dbReference type="RefSeq" id="WP_003728429.1">
    <property type="nucleotide sequence ID" value="NC_012488.1"/>
</dbReference>
<dbReference type="SMR" id="C1KW79"/>
<dbReference type="MEROPS" id="M20.003"/>
<dbReference type="KEGG" id="lmc:Lm4b_01796"/>
<dbReference type="HOGENOM" id="CLU_053676_0_0_9"/>
<dbReference type="GO" id="GO:0005829">
    <property type="term" value="C:cytosol"/>
    <property type="evidence" value="ECO:0007669"/>
    <property type="project" value="TreeGrafter"/>
</dbReference>
<dbReference type="GO" id="GO:0008237">
    <property type="term" value="F:metallopeptidase activity"/>
    <property type="evidence" value="ECO:0007669"/>
    <property type="project" value="UniProtKB-KW"/>
</dbReference>
<dbReference type="GO" id="GO:0045148">
    <property type="term" value="F:tripeptide aminopeptidase activity"/>
    <property type="evidence" value="ECO:0007669"/>
    <property type="project" value="UniProtKB-UniRule"/>
</dbReference>
<dbReference type="GO" id="GO:0008270">
    <property type="term" value="F:zinc ion binding"/>
    <property type="evidence" value="ECO:0007669"/>
    <property type="project" value="UniProtKB-UniRule"/>
</dbReference>
<dbReference type="GO" id="GO:0043171">
    <property type="term" value="P:peptide catabolic process"/>
    <property type="evidence" value="ECO:0007669"/>
    <property type="project" value="UniProtKB-UniRule"/>
</dbReference>
<dbReference type="GO" id="GO:0006508">
    <property type="term" value="P:proteolysis"/>
    <property type="evidence" value="ECO:0007669"/>
    <property type="project" value="UniProtKB-UniRule"/>
</dbReference>
<dbReference type="CDD" id="cd03892">
    <property type="entry name" value="M20_peptT"/>
    <property type="match status" value="1"/>
</dbReference>
<dbReference type="FunFam" id="3.30.70.360:FF:000002">
    <property type="entry name" value="Peptidase T"/>
    <property type="match status" value="1"/>
</dbReference>
<dbReference type="Gene3D" id="3.30.70.360">
    <property type="match status" value="1"/>
</dbReference>
<dbReference type="Gene3D" id="3.40.630.10">
    <property type="entry name" value="Zn peptidases"/>
    <property type="match status" value="1"/>
</dbReference>
<dbReference type="HAMAP" id="MF_00550">
    <property type="entry name" value="Aminopeptidase_M20"/>
    <property type="match status" value="1"/>
</dbReference>
<dbReference type="InterPro" id="IPR001261">
    <property type="entry name" value="ArgE/DapE_CS"/>
</dbReference>
<dbReference type="InterPro" id="IPR036264">
    <property type="entry name" value="Bact_exopeptidase_dim_dom"/>
</dbReference>
<dbReference type="InterPro" id="IPR002933">
    <property type="entry name" value="Peptidase_M20"/>
</dbReference>
<dbReference type="InterPro" id="IPR011650">
    <property type="entry name" value="Peptidase_M20_dimer"/>
</dbReference>
<dbReference type="InterPro" id="IPR010161">
    <property type="entry name" value="Peptidase_M20B"/>
</dbReference>
<dbReference type="NCBIfam" id="TIGR01882">
    <property type="entry name" value="peptidase-T"/>
    <property type="match status" value="1"/>
</dbReference>
<dbReference type="NCBIfam" id="NF003976">
    <property type="entry name" value="PRK05469.1"/>
    <property type="match status" value="1"/>
</dbReference>
<dbReference type="NCBIfam" id="NF009920">
    <property type="entry name" value="PRK13381.1"/>
    <property type="match status" value="1"/>
</dbReference>
<dbReference type="PANTHER" id="PTHR42994">
    <property type="entry name" value="PEPTIDASE T"/>
    <property type="match status" value="1"/>
</dbReference>
<dbReference type="PANTHER" id="PTHR42994:SF1">
    <property type="entry name" value="PEPTIDASE T"/>
    <property type="match status" value="1"/>
</dbReference>
<dbReference type="Pfam" id="PF07687">
    <property type="entry name" value="M20_dimer"/>
    <property type="match status" value="1"/>
</dbReference>
<dbReference type="Pfam" id="PF01546">
    <property type="entry name" value="Peptidase_M20"/>
    <property type="match status" value="1"/>
</dbReference>
<dbReference type="PIRSF" id="PIRSF037215">
    <property type="entry name" value="Peptidase_M20B"/>
    <property type="match status" value="1"/>
</dbReference>
<dbReference type="SUPFAM" id="SSF55031">
    <property type="entry name" value="Bacterial exopeptidase dimerisation domain"/>
    <property type="match status" value="1"/>
</dbReference>
<dbReference type="SUPFAM" id="SSF53187">
    <property type="entry name" value="Zn-dependent exopeptidases"/>
    <property type="match status" value="1"/>
</dbReference>
<dbReference type="PROSITE" id="PS00758">
    <property type="entry name" value="ARGE_DAPE_CPG2_1"/>
    <property type="match status" value="1"/>
</dbReference>
<dbReference type="PROSITE" id="PS00759">
    <property type="entry name" value="ARGE_DAPE_CPG2_2"/>
    <property type="match status" value="1"/>
</dbReference>
<organism>
    <name type="scientific">Listeria monocytogenes serotype 4b (strain CLIP80459)</name>
    <dbReference type="NCBI Taxonomy" id="568819"/>
    <lineage>
        <taxon>Bacteria</taxon>
        <taxon>Bacillati</taxon>
        <taxon>Bacillota</taxon>
        <taxon>Bacilli</taxon>
        <taxon>Bacillales</taxon>
        <taxon>Listeriaceae</taxon>
        <taxon>Listeria</taxon>
    </lineage>
</organism>
<protein>
    <recommendedName>
        <fullName evidence="1">Peptidase T</fullName>
        <ecNumber evidence="1">3.4.11.4</ecNumber>
    </recommendedName>
    <alternativeName>
        <fullName evidence="1">Aminotripeptidase</fullName>
        <shortName evidence="1">Tripeptidase</shortName>
    </alternativeName>
    <alternativeName>
        <fullName evidence="1">Tripeptide aminopeptidase</fullName>
    </alternativeName>
</protein>
<proteinExistence type="inferred from homology"/>
<name>PEPT_LISMC</name>
<keyword id="KW-0031">Aminopeptidase</keyword>
<keyword id="KW-0963">Cytoplasm</keyword>
<keyword id="KW-0378">Hydrolase</keyword>
<keyword id="KW-0479">Metal-binding</keyword>
<keyword id="KW-0482">Metalloprotease</keyword>
<keyword id="KW-0645">Protease</keyword>
<keyword id="KW-0862">Zinc</keyword>